<protein>
    <recommendedName>
        <fullName evidence="1">Cell division protein FtsB</fullName>
    </recommendedName>
</protein>
<evidence type="ECO:0000255" key="1">
    <source>
        <dbReference type="HAMAP-Rule" id="MF_00599"/>
    </source>
</evidence>
<keyword id="KW-0131">Cell cycle</keyword>
<keyword id="KW-0132">Cell division</keyword>
<keyword id="KW-0997">Cell inner membrane</keyword>
<keyword id="KW-1003">Cell membrane</keyword>
<keyword id="KW-0175">Coiled coil</keyword>
<keyword id="KW-0472">Membrane</keyword>
<keyword id="KW-0812">Transmembrane</keyword>
<keyword id="KW-1133">Transmembrane helix</keyword>
<comment type="function">
    <text evidence="1">Essential cell division protein. May link together the upstream cell division proteins, which are predominantly cytoplasmic, with the downstream cell division proteins, which are predominantly periplasmic.</text>
</comment>
<comment type="subunit">
    <text evidence="1">Part of a complex composed of FtsB, FtsL and FtsQ.</text>
</comment>
<comment type="subcellular location">
    <subcellularLocation>
        <location evidence="1">Cell inner membrane</location>
        <topology evidence="1">Single-pass type II membrane protein</topology>
    </subcellularLocation>
    <text evidence="1">Localizes to the division septum.</text>
</comment>
<comment type="similarity">
    <text evidence="1">Belongs to the FtsB family.</text>
</comment>
<organism>
    <name type="scientific">Salmonella dublin (strain CT_02021853)</name>
    <dbReference type="NCBI Taxonomy" id="439851"/>
    <lineage>
        <taxon>Bacteria</taxon>
        <taxon>Pseudomonadati</taxon>
        <taxon>Pseudomonadota</taxon>
        <taxon>Gammaproteobacteria</taxon>
        <taxon>Enterobacterales</taxon>
        <taxon>Enterobacteriaceae</taxon>
        <taxon>Salmonella</taxon>
    </lineage>
</organism>
<dbReference type="EMBL" id="CP001144">
    <property type="protein sequence ID" value="ACH75798.1"/>
    <property type="molecule type" value="Genomic_DNA"/>
</dbReference>
<dbReference type="RefSeq" id="WP_000517480.1">
    <property type="nucleotide sequence ID" value="NC_011205.1"/>
</dbReference>
<dbReference type="SMR" id="B5FTS6"/>
<dbReference type="KEGG" id="sed:SeD_A3241"/>
<dbReference type="HOGENOM" id="CLU_134863_5_2_6"/>
<dbReference type="Proteomes" id="UP000008322">
    <property type="component" value="Chromosome"/>
</dbReference>
<dbReference type="GO" id="GO:0032153">
    <property type="term" value="C:cell division site"/>
    <property type="evidence" value="ECO:0007669"/>
    <property type="project" value="UniProtKB-UniRule"/>
</dbReference>
<dbReference type="GO" id="GO:0030428">
    <property type="term" value="C:cell septum"/>
    <property type="evidence" value="ECO:0007669"/>
    <property type="project" value="TreeGrafter"/>
</dbReference>
<dbReference type="GO" id="GO:0005886">
    <property type="term" value="C:plasma membrane"/>
    <property type="evidence" value="ECO:0007669"/>
    <property type="project" value="UniProtKB-SubCell"/>
</dbReference>
<dbReference type="GO" id="GO:0043093">
    <property type="term" value="P:FtsZ-dependent cytokinesis"/>
    <property type="evidence" value="ECO:0007669"/>
    <property type="project" value="UniProtKB-UniRule"/>
</dbReference>
<dbReference type="FunFam" id="1.20.5.400:FF:000001">
    <property type="entry name" value="Cell division protein FtsB"/>
    <property type="match status" value="1"/>
</dbReference>
<dbReference type="Gene3D" id="1.20.5.400">
    <property type="match status" value="1"/>
</dbReference>
<dbReference type="HAMAP" id="MF_00599">
    <property type="entry name" value="FtsB"/>
    <property type="match status" value="1"/>
</dbReference>
<dbReference type="InterPro" id="IPR023081">
    <property type="entry name" value="Cell_div_FtsB"/>
</dbReference>
<dbReference type="InterPro" id="IPR007060">
    <property type="entry name" value="FtsL/DivIC"/>
</dbReference>
<dbReference type="NCBIfam" id="NF002058">
    <property type="entry name" value="PRK00888.1"/>
    <property type="match status" value="1"/>
</dbReference>
<dbReference type="PANTHER" id="PTHR37485">
    <property type="entry name" value="CELL DIVISION PROTEIN FTSB"/>
    <property type="match status" value="1"/>
</dbReference>
<dbReference type="PANTHER" id="PTHR37485:SF1">
    <property type="entry name" value="CELL DIVISION PROTEIN FTSB"/>
    <property type="match status" value="1"/>
</dbReference>
<dbReference type="Pfam" id="PF04977">
    <property type="entry name" value="DivIC"/>
    <property type="match status" value="1"/>
</dbReference>
<sequence>MGKLTLLLLALLVWLQYSLWFGKNGIHDYSRVNDDVVAQQATNAKLKARNDQLFAEIDDLNGGQEAIEERARNELSMTKPGETFYRLVPDASKRAATAGQTHR</sequence>
<proteinExistence type="inferred from homology"/>
<name>FTSB_SALDC</name>
<accession>B5FTS6</accession>
<reference key="1">
    <citation type="journal article" date="2011" name="J. Bacteriol.">
        <title>Comparative genomics of 28 Salmonella enterica isolates: evidence for CRISPR-mediated adaptive sublineage evolution.</title>
        <authorList>
            <person name="Fricke W.F."/>
            <person name="Mammel M.K."/>
            <person name="McDermott P.F."/>
            <person name="Tartera C."/>
            <person name="White D.G."/>
            <person name="Leclerc J.E."/>
            <person name="Ravel J."/>
            <person name="Cebula T.A."/>
        </authorList>
    </citation>
    <scope>NUCLEOTIDE SEQUENCE [LARGE SCALE GENOMIC DNA]</scope>
    <source>
        <strain>CT_02021853</strain>
    </source>
</reference>
<feature type="chain" id="PRO_1000129938" description="Cell division protein FtsB">
    <location>
        <begin position="1"/>
        <end position="103"/>
    </location>
</feature>
<feature type="topological domain" description="Cytoplasmic" evidence="1">
    <location>
        <begin position="1"/>
        <end position="3"/>
    </location>
</feature>
<feature type="transmembrane region" description="Helical" evidence="1">
    <location>
        <begin position="4"/>
        <end position="21"/>
    </location>
</feature>
<feature type="topological domain" description="Periplasmic" evidence="1">
    <location>
        <begin position="22"/>
        <end position="103"/>
    </location>
</feature>
<feature type="coiled-coil region" evidence="1">
    <location>
        <begin position="33"/>
        <end position="62"/>
    </location>
</feature>
<gene>
    <name evidence="1" type="primary">ftsB</name>
    <name type="ordered locus">SeD_A3241</name>
</gene>